<feature type="chain" id="PRO_0000149786" description="Uncharacterized HTH-type transcriptional regulator AF_1627">
    <location>
        <begin position="1"/>
        <end position="71"/>
    </location>
</feature>
<feature type="domain" description="HTH cro/C1-type" evidence="1">
    <location>
        <begin position="5"/>
        <end position="59"/>
    </location>
</feature>
<feature type="DNA-binding region" description="H-T-H motif" evidence="1">
    <location>
        <begin position="16"/>
        <end position="35"/>
    </location>
</feature>
<dbReference type="EMBL" id="AE000782">
    <property type="protein sequence ID" value="AAB89623.1"/>
    <property type="molecule type" value="Genomic_DNA"/>
</dbReference>
<dbReference type="PIR" id="B69453">
    <property type="entry name" value="B69453"/>
</dbReference>
<dbReference type="RefSeq" id="WP_010879124.1">
    <property type="nucleotide sequence ID" value="NC_000917.1"/>
</dbReference>
<dbReference type="SMR" id="O28646"/>
<dbReference type="STRING" id="224325.AF_1627"/>
<dbReference type="PaxDb" id="224325-AF_1627"/>
<dbReference type="EnsemblBacteria" id="AAB89623">
    <property type="protein sequence ID" value="AAB89623"/>
    <property type="gene ID" value="AF_1627"/>
</dbReference>
<dbReference type="KEGG" id="afu:AF_1627"/>
<dbReference type="eggNOG" id="arCOG01864">
    <property type="taxonomic scope" value="Archaea"/>
</dbReference>
<dbReference type="HOGENOM" id="CLU_066192_44_1_2"/>
<dbReference type="OrthoDB" id="67699at2157"/>
<dbReference type="PhylomeDB" id="O28646"/>
<dbReference type="Proteomes" id="UP000002199">
    <property type="component" value="Chromosome"/>
</dbReference>
<dbReference type="GO" id="GO:0003677">
    <property type="term" value="F:DNA binding"/>
    <property type="evidence" value="ECO:0007669"/>
    <property type="project" value="UniProtKB-KW"/>
</dbReference>
<dbReference type="CDD" id="cd00093">
    <property type="entry name" value="HTH_XRE"/>
    <property type="match status" value="1"/>
</dbReference>
<dbReference type="Gene3D" id="1.10.260.40">
    <property type="entry name" value="lambda repressor-like DNA-binding domains"/>
    <property type="match status" value="1"/>
</dbReference>
<dbReference type="InterPro" id="IPR001387">
    <property type="entry name" value="Cro/C1-type_HTH"/>
</dbReference>
<dbReference type="InterPro" id="IPR010982">
    <property type="entry name" value="Lambda_DNA-bd_dom_sf"/>
</dbReference>
<dbReference type="PANTHER" id="PTHR46558">
    <property type="entry name" value="TRACRIPTIONAL REGULATORY PROTEIN-RELATED-RELATED"/>
    <property type="match status" value="1"/>
</dbReference>
<dbReference type="PANTHER" id="PTHR46558:SF7">
    <property type="entry name" value="TRANSCRIPTIONAL REGULATOR"/>
    <property type="match status" value="1"/>
</dbReference>
<dbReference type="Pfam" id="PF01381">
    <property type="entry name" value="HTH_3"/>
    <property type="match status" value="1"/>
</dbReference>
<dbReference type="SMART" id="SM00530">
    <property type="entry name" value="HTH_XRE"/>
    <property type="match status" value="1"/>
</dbReference>
<dbReference type="SUPFAM" id="SSF47413">
    <property type="entry name" value="lambda repressor-like DNA-binding domains"/>
    <property type="match status" value="1"/>
</dbReference>
<dbReference type="PROSITE" id="PS50943">
    <property type="entry name" value="HTH_CROC1"/>
    <property type="match status" value="1"/>
</dbReference>
<gene>
    <name type="ordered locus">AF_1627</name>
</gene>
<sequence>MRTRIKEFRAKFNMTQEELAKRVGVRRETIVFLEKGKYNPSLKLAYKIARVFNAKIEDIFIFDEEELWEKR</sequence>
<name>Y1627_ARCFU</name>
<accession>O28646</accession>
<proteinExistence type="predicted"/>
<reference key="1">
    <citation type="journal article" date="1997" name="Nature">
        <title>The complete genome sequence of the hyperthermophilic, sulphate-reducing archaeon Archaeoglobus fulgidus.</title>
        <authorList>
            <person name="Klenk H.-P."/>
            <person name="Clayton R.A."/>
            <person name="Tomb J.-F."/>
            <person name="White O."/>
            <person name="Nelson K.E."/>
            <person name="Ketchum K.A."/>
            <person name="Dodson R.J."/>
            <person name="Gwinn M.L."/>
            <person name="Hickey E.K."/>
            <person name="Peterson J.D."/>
            <person name="Richardson D.L."/>
            <person name="Kerlavage A.R."/>
            <person name="Graham D.E."/>
            <person name="Kyrpides N.C."/>
            <person name="Fleischmann R.D."/>
            <person name="Quackenbush J."/>
            <person name="Lee N.H."/>
            <person name="Sutton G.G."/>
            <person name="Gill S.R."/>
            <person name="Kirkness E.F."/>
            <person name="Dougherty B.A."/>
            <person name="McKenney K."/>
            <person name="Adams M.D."/>
            <person name="Loftus B.J."/>
            <person name="Peterson S.N."/>
            <person name="Reich C.I."/>
            <person name="McNeil L.K."/>
            <person name="Badger J.H."/>
            <person name="Glodek A."/>
            <person name="Zhou L."/>
            <person name="Overbeek R."/>
            <person name="Gocayne J.D."/>
            <person name="Weidman J.F."/>
            <person name="McDonald L.A."/>
            <person name="Utterback T.R."/>
            <person name="Cotton M.D."/>
            <person name="Spriggs T."/>
            <person name="Artiach P."/>
            <person name="Kaine B.P."/>
            <person name="Sykes S.M."/>
            <person name="Sadow P.W."/>
            <person name="D'Andrea K.P."/>
            <person name="Bowman C."/>
            <person name="Fujii C."/>
            <person name="Garland S.A."/>
            <person name="Mason T.M."/>
            <person name="Olsen G.J."/>
            <person name="Fraser C.M."/>
            <person name="Smith H.O."/>
            <person name="Woese C.R."/>
            <person name="Venter J.C."/>
        </authorList>
    </citation>
    <scope>NUCLEOTIDE SEQUENCE [LARGE SCALE GENOMIC DNA]</scope>
    <source>
        <strain>ATCC 49558 / DSM 4304 / JCM 9628 / NBRC 100126 / VC-16</strain>
    </source>
</reference>
<organism>
    <name type="scientific">Archaeoglobus fulgidus (strain ATCC 49558 / DSM 4304 / JCM 9628 / NBRC 100126 / VC-16)</name>
    <dbReference type="NCBI Taxonomy" id="224325"/>
    <lineage>
        <taxon>Archaea</taxon>
        <taxon>Methanobacteriati</taxon>
        <taxon>Methanobacteriota</taxon>
        <taxon>Archaeoglobi</taxon>
        <taxon>Archaeoglobales</taxon>
        <taxon>Archaeoglobaceae</taxon>
        <taxon>Archaeoglobus</taxon>
    </lineage>
</organism>
<keyword id="KW-0238">DNA-binding</keyword>
<keyword id="KW-1185">Reference proteome</keyword>
<keyword id="KW-0804">Transcription</keyword>
<keyword id="KW-0805">Transcription regulation</keyword>
<evidence type="ECO:0000255" key="1">
    <source>
        <dbReference type="PROSITE-ProRule" id="PRU00257"/>
    </source>
</evidence>
<protein>
    <recommendedName>
        <fullName>Uncharacterized HTH-type transcriptional regulator AF_1627</fullName>
    </recommendedName>
</protein>